<gene>
    <name evidence="1" type="primary">pyrD</name>
    <name type="ordered locus">NTHI1745</name>
</gene>
<keyword id="KW-1003">Cell membrane</keyword>
<keyword id="KW-0285">Flavoprotein</keyword>
<keyword id="KW-0288">FMN</keyword>
<keyword id="KW-0472">Membrane</keyword>
<keyword id="KW-0560">Oxidoreductase</keyword>
<keyword id="KW-0665">Pyrimidine biosynthesis</keyword>
<sequence length="339" mass="37334">MYQLFRHGIFQMDAEKAHDFTIQCLKLASNPLFQPILKSLIHAPKGFPKTVMGVNFPNPIGLAAGADKNGDAIDGFGTLGFGFLEVGTVTPVAQDGNAKPRQFRLIEAEGIINRNGFNNNGIDYLIENVKNARYKGVIGINIGKNKFTSLEQGKDDYIFCLNKAYNYAGYITVNISSPNTPDLRQLQYGDYFDDLLRSIKDRQAILANQYNKYVPIAVKIAPDLTESELVQIADTLVRHKMDGVIATNTTVSRDTVMGMKNAEQQGGLSGKPLQHKSTEIIKRLHQELKGQIPIIGSGGIDGLQNAQEKIEAGAELLQVYSGLIYHGPKLVKELVKNIK</sequence>
<evidence type="ECO:0000255" key="1">
    <source>
        <dbReference type="HAMAP-Rule" id="MF_00225"/>
    </source>
</evidence>
<accession>Q4QKB5</accession>
<name>PYRD_HAEI8</name>
<protein>
    <recommendedName>
        <fullName evidence="1">Dihydroorotate dehydrogenase (quinone)</fullName>
        <ecNumber evidence="1">1.3.5.2</ecNumber>
    </recommendedName>
    <alternativeName>
        <fullName evidence="1">DHOdehase</fullName>
        <shortName evidence="1">DHOD</shortName>
        <shortName evidence="1">DHODase</shortName>
    </alternativeName>
    <alternativeName>
        <fullName evidence="1">Dihydroorotate oxidase</fullName>
    </alternativeName>
</protein>
<comment type="function">
    <text evidence="1">Catalyzes the conversion of dihydroorotate to orotate with quinone as electron acceptor.</text>
</comment>
<comment type="catalytic activity">
    <reaction evidence="1">
        <text>(S)-dihydroorotate + a quinone = orotate + a quinol</text>
        <dbReference type="Rhea" id="RHEA:30187"/>
        <dbReference type="ChEBI" id="CHEBI:24646"/>
        <dbReference type="ChEBI" id="CHEBI:30839"/>
        <dbReference type="ChEBI" id="CHEBI:30864"/>
        <dbReference type="ChEBI" id="CHEBI:132124"/>
        <dbReference type="EC" id="1.3.5.2"/>
    </reaction>
</comment>
<comment type="cofactor">
    <cofactor evidence="1">
        <name>FMN</name>
        <dbReference type="ChEBI" id="CHEBI:58210"/>
    </cofactor>
    <text evidence="1">Binds 1 FMN per subunit.</text>
</comment>
<comment type="pathway">
    <text evidence="1">Pyrimidine metabolism; UMP biosynthesis via de novo pathway; orotate from (S)-dihydroorotate (quinone route): step 1/1.</text>
</comment>
<comment type="subunit">
    <text evidence="1">Monomer.</text>
</comment>
<comment type="subcellular location">
    <subcellularLocation>
        <location evidence="1">Cell membrane</location>
        <topology evidence="1">Peripheral membrane protein</topology>
    </subcellularLocation>
</comment>
<comment type="similarity">
    <text evidence="1">Belongs to the dihydroorotate dehydrogenase family. Type 2 subfamily.</text>
</comment>
<organism>
    <name type="scientific">Haemophilus influenzae (strain 86-028NP)</name>
    <dbReference type="NCBI Taxonomy" id="281310"/>
    <lineage>
        <taxon>Bacteria</taxon>
        <taxon>Pseudomonadati</taxon>
        <taxon>Pseudomonadota</taxon>
        <taxon>Gammaproteobacteria</taxon>
        <taxon>Pasteurellales</taxon>
        <taxon>Pasteurellaceae</taxon>
        <taxon>Haemophilus</taxon>
    </lineage>
</organism>
<dbReference type="EC" id="1.3.5.2" evidence="1"/>
<dbReference type="EMBL" id="CP000057">
    <property type="protein sequence ID" value="AAX88532.1"/>
    <property type="molecule type" value="Genomic_DNA"/>
</dbReference>
<dbReference type="RefSeq" id="WP_005656693.1">
    <property type="nucleotide sequence ID" value="NC_007146.2"/>
</dbReference>
<dbReference type="SMR" id="Q4QKB5"/>
<dbReference type="KEGG" id="hit:NTHI1745"/>
<dbReference type="HOGENOM" id="CLU_013640_2_0_6"/>
<dbReference type="UniPathway" id="UPA00070">
    <property type="reaction ID" value="UER00946"/>
</dbReference>
<dbReference type="Proteomes" id="UP000002525">
    <property type="component" value="Chromosome"/>
</dbReference>
<dbReference type="GO" id="GO:0005737">
    <property type="term" value="C:cytoplasm"/>
    <property type="evidence" value="ECO:0007669"/>
    <property type="project" value="InterPro"/>
</dbReference>
<dbReference type="GO" id="GO:0005886">
    <property type="term" value="C:plasma membrane"/>
    <property type="evidence" value="ECO:0007669"/>
    <property type="project" value="UniProtKB-SubCell"/>
</dbReference>
<dbReference type="GO" id="GO:0106430">
    <property type="term" value="F:dihydroorotate dehydrogenase (quinone) activity"/>
    <property type="evidence" value="ECO:0007669"/>
    <property type="project" value="UniProtKB-EC"/>
</dbReference>
<dbReference type="GO" id="GO:0006207">
    <property type="term" value="P:'de novo' pyrimidine nucleobase biosynthetic process"/>
    <property type="evidence" value="ECO:0007669"/>
    <property type="project" value="InterPro"/>
</dbReference>
<dbReference type="GO" id="GO:0044205">
    <property type="term" value="P:'de novo' UMP biosynthetic process"/>
    <property type="evidence" value="ECO:0007669"/>
    <property type="project" value="UniProtKB-UniRule"/>
</dbReference>
<dbReference type="CDD" id="cd04738">
    <property type="entry name" value="DHOD_2_like"/>
    <property type="match status" value="1"/>
</dbReference>
<dbReference type="FunFam" id="3.20.20.70:FF:000028">
    <property type="entry name" value="Dihydroorotate dehydrogenase (quinone)"/>
    <property type="match status" value="1"/>
</dbReference>
<dbReference type="Gene3D" id="3.20.20.70">
    <property type="entry name" value="Aldolase class I"/>
    <property type="match status" value="1"/>
</dbReference>
<dbReference type="HAMAP" id="MF_00225">
    <property type="entry name" value="DHO_dh_type2"/>
    <property type="match status" value="1"/>
</dbReference>
<dbReference type="InterPro" id="IPR013785">
    <property type="entry name" value="Aldolase_TIM"/>
</dbReference>
<dbReference type="InterPro" id="IPR050074">
    <property type="entry name" value="DHO_dehydrogenase"/>
</dbReference>
<dbReference type="InterPro" id="IPR012135">
    <property type="entry name" value="Dihydroorotate_DH_1_2"/>
</dbReference>
<dbReference type="InterPro" id="IPR005719">
    <property type="entry name" value="Dihydroorotate_DH_2"/>
</dbReference>
<dbReference type="InterPro" id="IPR005720">
    <property type="entry name" value="Dihydroorotate_DH_cat"/>
</dbReference>
<dbReference type="InterPro" id="IPR001295">
    <property type="entry name" value="Dihydroorotate_DH_CS"/>
</dbReference>
<dbReference type="NCBIfam" id="NF003644">
    <property type="entry name" value="PRK05286.1-1"/>
    <property type="match status" value="1"/>
</dbReference>
<dbReference type="NCBIfam" id="NF003645">
    <property type="entry name" value="PRK05286.1-2"/>
    <property type="match status" value="1"/>
</dbReference>
<dbReference type="NCBIfam" id="NF003646">
    <property type="entry name" value="PRK05286.1-4"/>
    <property type="match status" value="1"/>
</dbReference>
<dbReference type="NCBIfam" id="NF003652">
    <property type="entry name" value="PRK05286.2-5"/>
    <property type="match status" value="1"/>
</dbReference>
<dbReference type="NCBIfam" id="TIGR01036">
    <property type="entry name" value="pyrD_sub2"/>
    <property type="match status" value="1"/>
</dbReference>
<dbReference type="PANTHER" id="PTHR48109:SF4">
    <property type="entry name" value="DIHYDROOROTATE DEHYDROGENASE (QUINONE), MITOCHONDRIAL"/>
    <property type="match status" value="1"/>
</dbReference>
<dbReference type="PANTHER" id="PTHR48109">
    <property type="entry name" value="DIHYDROOROTATE DEHYDROGENASE (QUINONE), MITOCHONDRIAL-RELATED"/>
    <property type="match status" value="1"/>
</dbReference>
<dbReference type="Pfam" id="PF01180">
    <property type="entry name" value="DHO_dh"/>
    <property type="match status" value="1"/>
</dbReference>
<dbReference type="PIRSF" id="PIRSF000164">
    <property type="entry name" value="DHO_oxidase"/>
    <property type="match status" value="1"/>
</dbReference>
<dbReference type="SUPFAM" id="SSF51395">
    <property type="entry name" value="FMN-linked oxidoreductases"/>
    <property type="match status" value="1"/>
</dbReference>
<dbReference type="PROSITE" id="PS00911">
    <property type="entry name" value="DHODEHASE_1"/>
    <property type="match status" value="1"/>
</dbReference>
<dbReference type="PROSITE" id="PS00912">
    <property type="entry name" value="DHODEHASE_2"/>
    <property type="match status" value="1"/>
</dbReference>
<proteinExistence type="inferred from homology"/>
<feature type="chain" id="PRO_1000024175" description="Dihydroorotate dehydrogenase (quinone)">
    <location>
        <begin position="1"/>
        <end position="339"/>
    </location>
</feature>
<feature type="active site" description="Nucleophile" evidence="1">
    <location>
        <position position="177"/>
    </location>
</feature>
<feature type="binding site" evidence="1">
    <location>
        <begin position="64"/>
        <end position="68"/>
    </location>
    <ligand>
        <name>FMN</name>
        <dbReference type="ChEBI" id="CHEBI:58210"/>
    </ligand>
</feature>
<feature type="binding site" evidence="1">
    <location>
        <position position="68"/>
    </location>
    <ligand>
        <name>substrate</name>
    </ligand>
</feature>
<feature type="binding site" evidence="1">
    <location>
        <position position="88"/>
    </location>
    <ligand>
        <name>FMN</name>
        <dbReference type="ChEBI" id="CHEBI:58210"/>
    </ligand>
</feature>
<feature type="binding site" evidence="1">
    <location>
        <begin position="113"/>
        <end position="117"/>
    </location>
    <ligand>
        <name>substrate</name>
    </ligand>
</feature>
<feature type="binding site" evidence="1">
    <location>
        <position position="141"/>
    </location>
    <ligand>
        <name>FMN</name>
        <dbReference type="ChEBI" id="CHEBI:58210"/>
    </ligand>
</feature>
<feature type="binding site" evidence="1">
    <location>
        <position position="174"/>
    </location>
    <ligand>
        <name>FMN</name>
        <dbReference type="ChEBI" id="CHEBI:58210"/>
    </ligand>
</feature>
<feature type="binding site" evidence="1">
    <location>
        <position position="174"/>
    </location>
    <ligand>
        <name>substrate</name>
    </ligand>
</feature>
<feature type="binding site" evidence="1">
    <location>
        <position position="179"/>
    </location>
    <ligand>
        <name>substrate</name>
    </ligand>
</feature>
<feature type="binding site" evidence="1">
    <location>
        <position position="219"/>
    </location>
    <ligand>
        <name>FMN</name>
        <dbReference type="ChEBI" id="CHEBI:58210"/>
    </ligand>
</feature>
<feature type="binding site" evidence="1">
    <location>
        <position position="247"/>
    </location>
    <ligand>
        <name>FMN</name>
        <dbReference type="ChEBI" id="CHEBI:58210"/>
    </ligand>
</feature>
<feature type="binding site" evidence="1">
    <location>
        <begin position="248"/>
        <end position="249"/>
    </location>
    <ligand>
        <name>substrate</name>
    </ligand>
</feature>
<feature type="binding site" evidence="1">
    <location>
        <position position="270"/>
    </location>
    <ligand>
        <name>FMN</name>
        <dbReference type="ChEBI" id="CHEBI:58210"/>
    </ligand>
</feature>
<feature type="binding site" evidence="1">
    <location>
        <position position="299"/>
    </location>
    <ligand>
        <name>FMN</name>
        <dbReference type="ChEBI" id="CHEBI:58210"/>
    </ligand>
</feature>
<feature type="binding site" evidence="1">
    <location>
        <begin position="320"/>
        <end position="321"/>
    </location>
    <ligand>
        <name>FMN</name>
        <dbReference type="ChEBI" id="CHEBI:58210"/>
    </ligand>
</feature>
<reference key="1">
    <citation type="journal article" date="2005" name="J. Bacteriol.">
        <title>Genomic sequence of an otitis media isolate of nontypeable Haemophilus influenzae: comparative study with H. influenzae serotype d, strain KW20.</title>
        <authorList>
            <person name="Harrison A."/>
            <person name="Dyer D.W."/>
            <person name="Gillaspy A."/>
            <person name="Ray W.C."/>
            <person name="Mungur R."/>
            <person name="Carson M.B."/>
            <person name="Zhong H."/>
            <person name="Gipson J."/>
            <person name="Gipson M."/>
            <person name="Johnson L.S."/>
            <person name="Lewis L."/>
            <person name="Bakaletz L.O."/>
            <person name="Munson R.S. Jr."/>
        </authorList>
    </citation>
    <scope>NUCLEOTIDE SEQUENCE [LARGE SCALE GENOMIC DNA]</scope>
    <source>
        <strain>86-028NP</strain>
    </source>
</reference>